<organism>
    <name type="scientific">Agrotis segetum granulosis virus</name>
    <name type="common">AsGV</name>
    <name type="synonym">Agrotis segetum granulovirus</name>
    <dbReference type="NCBI Taxonomy" id="10464"/>
    <lineage>
        <taxon>Viruses</taxon>
        <taxon>Viruses incertae sedis</taxon>
        <taxon>Naldaviricetes</taxon>
        <taxon>Lefavirales</taxon>
        <taxon>Baculoviridae</taxon>
        <taxon>Betabaculovirus</taxon>
        <taxon>Betabaculovirus agsegetum</taxon>
    </lineage>
</organism>
<dbReference type="PIR" id="A40233">
    <property type="entry name" value="PYNVGA"/>
</dbReference>
<dbReference type="SMR" id="P31035"/>
<dbReference type="GO" id="GO:0039679">
    <property type="term" value="C:viral occlusion body"/>
    <property type="evidence" value="ECO:0007669"/>
    <property type="project" value="UniProtKB-KW"/>
</dbReference>
<dbReference type="GO" id="GO:0005198">
    <property type="term" value="F:structural molecule activity"/>
    <property type="evidence" value="ECO:0007669"/>
    <property type="project" value="InterPro"/>
</dbReference>
<dbReference type="InterPro" id="IPR001746">
    <property type="entry name" value="Polyhedrin"/>
</dbReference>
<dbReference type="Pfam" id="PF00738">
    <property type="entry name" value="Polyhedrin"/>
    <property type="match status" value="1"/>
</dbReference>
<reference key="1">
    <citation type="journal article" date="1992" name="Virology">
        <title>The amino acid sequence determination of a granulin and polyhedrin from two baculoviruses infecting Agrotis segetum.</title>
        <authorList>
            <person name="Kozlov E.A."/>
            <person name="Rodnin N.V."/>
            <person name="Levitina T.L."/>
            <person name="Gusak N.M."/>
            <person name="Radomskij N.F."/>
            <person name="Palchikovskaya L.J."/>
        </authorList>
    </citation>
    <scope>PROTEIN SEQUENCE</scope>
</reference>
<sequence>GYNKSLRYSRHAGTSCLIDNQHYKQIASNGKDVRRKDRRISEAKYAPLKDLANQYMVTEDPFRGPGKNVRITLFKEIRRVEPDTHKLICNWSGKEFLRETWTRFISEEFPITTDQQIMNLLFELQLRPMQPNRCYRFTMQYALGAHPDYVAHDVIRQGDPYYVGPNQIERINLSKKGYAYPLTCLQSVYNENFDFFFDEHLWPYFHRPLVYVGMNSAEIEEIMIEVSVIFKIKEFAPDVPLFTGPAY</sequence>
<keyword id="KW-0903">Direct protein sequencing</keyword>
<keyword id="KW-0842">Viral occlusion body</keyword>
<organismHost>
    <name type="scientific">Agrotis segetum</name>
    <name type="common">Turnip moth</name>
    <dbReference type="NCBI Taxonomy" id="47767"/>
</organismHost>
<evidence type="ECO:0000305" key="1"/>
<protein>
    <recommendedName>
        <fullName>Granulin</fullName>
    </recommendedName>
    <alternativeName>
        <fullName>Matrix protein</fullName>
    </alternativeName>
</protein>
<feature type="chain" id="PRO_0000217261" description="Granulin">
    <location>
        <begin position="1"/>
        <end position="247"/>
    </location>
</feature>
<feature type="sequence variant">
    <original>M</original>
    <variation>I</variation>
    <location>
        <position position="56"/>
    </location>
</feature>
<feature type="sequence variant">
    <original>P</original>
    <variation>D</variation>
    <location>
        <position position="61"/>
    </location>
</feature>
<feature type="sequence variant">
    <original>S</original>
    <variation>A</variation>
    <location>
        <position position="227"/>
    </location>
</feature>
<proteinExistence type="evidence at protein level"/>
<name>GRAN_GVAS</name>
<accession>P31035</accession>
<comment type="function">
    <text>Component of the virus occlusion bodies, which are large proteinaceous structures, that protect the virus from the outside environment for extended periods until they are ingested by insect larvae.</text>
</comment>
<comment type="similarity">
    <text evidence="1">Belongs to the polyhedrin family.</text>
</comment>